<comment type="function">
    <text evidence="1">Required for accurate and efficient protein synthesis under certain stress conditions. May act as a fidelity factor of the translation reaction, by catalyzing a one-codon backward translocation of tRNAs on improperly translocated ribosomes. Back-translocation proceeds from a post-translocation (POST) complex to a pre-translocation (PRE) complex, thus giving elongation factor G a second chance to translocate the tRNAs correctly. Binds to ribosomes in a GTP-dependent manner.</text>
</comment>
<comment type="catalytic activity">
    <reaction evidence="1">
        <text>GTP + H2O = GDP + phosphate + H(+)</text>
        <dbReference type="Rhea" id="RHEA:19669"/>
        <dbReference type="ChEBI" id="CHEBI:15377"/>
        <dbReference type="ChEBI" id="CHEBI:15378"/>
        <dbReference type="ChEBI" id="CHEBI:37565"/>
        <dbReference type="ChEBI" id="CHEBI:43474"/>
        <dbReference type="ChEBI" id="CHEBI:58189"/>
        <dbReference type="EC" id="3.6.5.n1"/>
    </reaction>
</comment>
<comment type="subcellular location">
    <subcellularLocation>
        <location evidence="1">Cell inner membrane</location>
        <topology evidence="1">Peripheral membrane protein</topology>
        <orientation evidence="1">Cytoplasmic side</orientation>
    </subcellularLocation>
</comment>
<comment type="similarity">
    <text evidence="1">Belongs to the TRAFAC class translation factor GTPase superfamily. Classic translation factor GTPase family. LepA subfamily.</text>
</comment>
<feature type="chain" id="PRO_0000176378" description="Elongation factor 4">
    <location>
        <begin position="1"/>
        <end position="601"/>
    </location>
</feature>
<feature type="domain" description="tr-type G">
    <location>
        <begin position="7"/>
        <end position="189"/>
    </location>
</feature>
<feature type="binding site" evidence="1">
    <location>
        <begin position="19"/>
        <end position="24"/>
    </location>
    <ligand>
        <name>GTP</name>
        <dbReference type="ChEBI" id="CHEBI:37565"/>
    </ligand>
</feature>
<feature type="binding site" evidence="1">
    <location>
        <begin position="136"/>
        <end position="139"/>
    </location>
    <ligand>
        <name>GTP</name>
        <dbReference type="ChEBI" id="CHEBI:37565"/>
    </ligand>
</feature>
<accession>Q8PB55</accession>
<name>LEPA_XANCP</name>
<evidence type="ECO:0000255" key="1">
    <source>
        <dbReference type="HAMAP-Rule" id="MF_00071"/>
    </source>
</evidence>
<dbReference type="EC" id="3.6.5.n1" evidence="1"/>
<dbReference type="EMBL" id="AE008922">
    <property type="protein sequence ID" value="AAM40568.1"/>
    <property type="molecule type" value="Genomic_DNA"/>
</dbReference>
<dbReference type="RefSeq" id="NP_636644.1">
    <property type="nucleotide sequence ID" value="NC_003902.1"/>
</dbReference>
<dbReference type="SMR" id="Q8PB55"/>
<dbReference type="STRING" id="190485.XCC1270"/>
<dbReference type="EnsemblBacteria" id="AAM40568">
    <property type="protein sequence ID" value="AAM40568"/>
    <property type="gene ID" value="XCC1270"/>
</dbReference>
<dbReference type="KEGG" id="xcc:XCC1270"/>
<dbReference type="PATRIC" id="fig|190485.4.peg.1360"/>
<dbReference type="eggNOG" id="COG0481">
    <property type="taxonomic scope" value="Bacteria"/>
</dbReference>
<dbReference type="HOGENOM" id="CLU_009995_3_3_6"/>
<dbReference type="OrthoDB" id="9801472at2"/>
<dbReference type="Proteomes" id="UP000001010">
    <property type="component" value="Chromosome"/>
</dbReference>
<dbReference type="GO" id="GO:0005886">
    <property type="term" value="C:plasma membrane"/>
    <property type="evidence" value="ECO:0007669"/>
    <property type="project" value="UniProtKB-SubCell"/>
</dbReference>
<dbReference type="GO" id="GO:0005525">
    <property type="term" value="F:GTP binding"/>
    <property type="evidence" value="ECO:0007669"/>
    <property type="project" value="UniProtKB-UniRule"/>
</dbReference>
<dbReference type="GO" id="GO:0003924">
    <property type="term" value="F:GTPase activity"/>
    <property type="evidence" value="ECO:0007669"/>
    <property type="project" value="UniProtKB-UniRule"/>
</dbReference>
<dbReference type="GO" id="GO:0097216">
    <property type="term" value="F:guanosine tetraphosphate binding"/>
    <property type="evidence" value="ECO:0007669"/>
    <property type="project" value="UniProtKB-ARBA"/>
</dbReference>
<dbReference type="GO" id="GO:0043022">
    <property type="term" value="F:ribosome binding"/>
    <property type="evidence" value="ECO:0000318"/>
    <property type="project" value="GO_Central"/>
</dbReference>
<dbReference type="GO" id="GO:0003746">
    <property type="term" value="F:translation elongation factor activity"/>
    <property type="evidence" value="ECO:0007669"/>
    <property type="project" value="UniProtKB-UniRule"/>
</dbReference>
<dbReference type="GO" id="GO:0045727">
    <property type="term" value="P:positive regulation of translation"/>
    <property type="evidence" value="ECO:0000318"/>
    <property type="project" value="GO_Central"/>
</dbReference>
<dbReference type="CDD" id="cd03699">
    <property type="entry name" value="EF4_II"/>
    <property type="match status" value="1"/>
</dbReference>
<dbReference type="CDD" id="cd16260">
    <property type="entry name" value="EF4_III"/>
    <property type="match status" value="1"/>
</dbReference>
<dbReference type="CDD" id="cd01890">
    <property type="entry name" value="LepA"/>
    <property type="match status" value="1"/>
</dbReference>
<dbReference type="CDD" id="cd03709">
    <property type="entry name" value="lepA_C"/>
    <property type="match status" value="1"/>
</dbReference>
<dbReference type="FunFam" id="3.40.50.300:FF:000078">
    <property type="entry name" value="Elongation factor 4"/>
    <property type="match status" value="1"/>
</dbReference>
<dbReference type="FunFam" id="2.40.30.10:FF:000015">
    <property type="entry name" value="Translation factor GUF1, mitochondrial"/>
    <property type="match status" value="1"/>
</dbReference>
<dbReference type="FunFam" id="3.30.70.240:FF:000007">
    <property type="entry name" value="Translation factor GUF1, mitochondrial"/>
    <property type="match status" value="1"/>
</dbReference>
<dbReference type="FunFam" id="3.30.70.2570:FF:000001">
    <property type="entry name" value="Translation factor GUF1, mitochondrial"/>
    <property type="match status" value="1"/>
</dbReference>
<dbReference type="FunFam" id="3.30.70.870:FF:000004">
    <property type="entry name" value="Translation factor GUF1, mitochondrial"/>
    <property type="match status" value="1"/>
</dbReference>
<dbReference type="Gene3D" id="3.30.70.240">
    <property type="match status" value="1"/>
</dbReference>
<dbReference type="Gene3D" id="3.30.70.2570">
    <property type="entry name" value="Elongation factor 4, C-terminal domain"/>
    <property type="match status" value="1"/>
</dbReference>
<dbReference type="Gene3D" id="3.30.70.870">
    <property type="entry name" value="Elongation Factor G (Translational Gtpase), domain 3"/>
    <property type="match status" value="1"/>
</dbReference>
<dbReference type="Gene3D" id="3.40.50.300">
    <property type="entry name" value="P-loop containing nucleotide triphosphate hydrolases"/>
    <property type="match status" value="1"/>
</dbReference>
<dbReference type="Gene3D" id="2.40.30.10">
    <property type="entry name" value="Translation factors"/>
    <property type="match status" value="1"/>
</dbReference>
<dbReference type="HAMAP" id="MF_00071">
    <property type="entry name" value="LepA"/>
    <property type="match status" value="1"/>
</dbReference>
<dbReference type="InterPro" id="IPR006297">
    <property type="entry name" value="EF-4"/>
</dbReference>
<dbReference type="InterPro" id="IPR035647">
    <property type="entry name" value="EFG_III/V"/>
</dbReference>
<dbReference type="InterPro" id="IPR000640">
    <property type="entry name" value="EFG_V-like"/>
</dbReference>
<dbReference type="InterPro" id="IPR004161">
    <property type="entry name" value="EFTu-like_2"/>
</dbReference>
<dbReference type="InterPro" id="IPR031157">
    <property type="entry name" value="G_TR_CS"/>
</dbReference>
<dbReference type="InterPro" id="IPR038363">
    <property type="entry name" value="LepA_C_sf"/>
</dbReference>
<dbReference type="InterPro" id="IPR013842">
    <property type="entry name" value="LepA_CTD"/>
</dbReference>
<dbReference type="InterPro" id="IPR035654">
    <property type="entry name" value="LepA_IV"/>
</dbReference>
<dbReference type="InterPro" id="IPR027417">
    <property type="entry name" value="P-loop_NTPase"/>
</dbReference>
<dbReference type="InterPro" id="IPR005225">
    <property type="entry name" value="Small_GTP-bd"/>
</dbReference>
<dbReference type="InterPro" id="IPR000795">
    <property type="entry name" value="T_Tr_GTP-bd_dom"/>
</dbReference>
<dbReference type="NCBIfam" id="TIGR01393">
    <property type="entry name" value="lepA"/>
    <property type="match status" value="1"/>
</dbReference>
<dbReference type="NCBIfam" id="TIGR00231">
    <property type="entry name" value="small_GTP"/>
    <property type="match status" value="1"/>
</dbReference>
<dbReference type="PANTHER" id="PTHR43512:SF4">
    <property type="entry name" value="TRANSLATION FACTOR GUF1 HOMOLOG, CHLOROPLASTIC"/>
    <property type="match status" value="1"/>
</dbReference>
<dbReference type="PANTHER" id="PTHR43512">
    <property type="entry name" value="TRANSLATION FACTOR GUF1-RELATED"/>
    <property type="match status" value="1"/>
</dbReference>
<dbReference type="Pfam" id="PF00679">
    <property type="entry name" value="EFG_C"/>
    <property type="match status" value="1"/>
</dbReference>
<dbReference type="Pfam" id="PF00009">
    <property type="entry name" value="GTP_EFTU"/>
    <property type="match status" value="1"/>
</dbReference>
<dbReference type="Pfam" id="PF03144">
    <property type="entry name" value="GTP_EFTU_D2"/>
    <property type="match status" value="1"/>
</dbReference>
<dbReference type="Pfam" id="PF06421">
    <property type="entry name" value="LepA_C"/>
    <property type="match status" value="1"/>
</dbReference>
<dbReference type="PRINTS" id="PR00315">
    <property type="entry name" value="ELONGATNFCT"/>
</dbReference>
<dbReference type="SMART" id="SM00838">
    <property type="entry name" value="EFG_C"/>
    <property type="match status" value="1"/>
</dbReference>
<dbReference type="SUPFAM" id="SSF54980">
    <property type="entry name" value="EF-G C-terminal domain-like"/>
    <property type="match status" value="2"/>
</dbReference>
<dbReference type="SUPFAM" id="SSF52540">
    <property type="entry name" value="P-loop containing nucleoside triphosphate hydrolases"/>
    <property type="match status" value="1"/>
</dbReference>
<dbReference type="PROSITE" id="PS00301">
    <property type="entry name" value="G_TR_1"/>
    <property type="match status" value="1"/>
</dbReference>
<dbReference type="PROSITE" id="PS51722">
    <property type="entry name" value="G_TR_2"/>
    <property type="match status" value="1"/>
</dbReference>
<proteinExistence type="inferred from homology"/>
<protein>
    <recommendedName>
        <fullName evidence="1">Elongation factor 4</fullName>
        <shortName evidence="1">EF-4</shortName>
        <ecNumber evidence="1">3.6.5.n1</ecNumber>
    </recommendedName>
    <alternativeName>
        <fullName evidence="1">Ribosomal back-translocase LepA</fullName>
    </alternativeName>
</protein>
<reference key="1">
    <citation type="journal article" date="2002" name="Nature">
        <title>Comparison of the genomes of two Xanthomonas pathogens with differing host specificities.</title>
        <authorList>
            <person name="da Silva A.C.R."/>
            <person name="Ferro J.A."/>
            <person name="Reinach F.C."/>
            <person name="Farah C.S."/>
            <person name="Furlan L.R."/>
            <person name="Quaggio R.B."/>
            <person name="Monteiro-Vitorello C.B."/>
            <person name="Van Sluys M.A."/>
            <person name="Almeida N.F. Jr."/>
            <person name="Alves L.M.C."/>
            <person name="do Amaral A.M."/>
            <person name="Bertolini M.C."/>
            <person name="Camargo L.E.A."/>
            <person name="Camarotte G."/>
            <person name="Cannavan F."/>
            <person name="Cardozo J."/>
            <person name="Chambergo F."/>
            <person name="Ciapina L.P."/>
            <person name="Cicarelli R.M.B."/>
            <person name="Coutinho L.L."/>
            <person name="Cursino-Santos J.R."/>
            <person name="El-Dorry H."/>
            <person name="Faria J.B."/>
            <person name="Ferreira A.J.S."/>
            <person name="Ferreira R.C.C."/>
            <person name="Ferro M.I.T."/>
            <person name="Formighieri E.F."/>
            <person name="Franco M.C."/>
            <person name="Greggio C.C."/>
            <person name="Gruber A."/>
            <person name="Katsuyama A.M."/>
            <person name="Kishi L.T."/>
            <person name="Leite R.P."/>
            <person name="Lemos E.G.M."/>
            <person name="Lemos M.V.F."/>
            <person name="Locali E.C."/>
            <person name="Machado M.A."/>
            <person name="Madeira A.M.B.N."/>
            <person name="Martinez-Rossi N.M."/>
            <person name="Martins E.C."/>
            <person name="Meidanis J."/>
            <person name="Menck C.F.M."/>
            <person name="Miyaki C.Y."/>
            <person name="Moon D.H."/>
            <person name="Moreira L.M."/>
            <person name="Novo M.T.M."/>
            <person name="Okura V.K."/>
            <person name="Oliveira M.C."/>
            <person name="Oliveira V.R."/>
            <person name="Pereira H.A."/>
            <person name="Rossi A."/>
            <person name="Sena J.A.D."/>
            <person name="Silva C."/>
            <person name="de Souza R.F."/>
            <person name="Spinola L.A.F."/>
            <person name="Takita M.A."/>
            <person name="Tamura R.E."/>
            <person name="Teixeira E.C."/>
            <person name="Tezza R.I.D."/>
            <person name="Trindade dos Santos M."/>
            <person name="Truffi D."/>
            <person name="Tsai S.M."/>
            <person name="White F.F."/>
            <person name="Setubal J.C."/>
            <person name="Kitajima J.P."/>
        </authorList>
    </citation>
    <scope>NUCLEOTIDE SEQUENCE [LARGE SCALE GENOMIC DNA]</scope>
    <source>
        <strain>ATCC 33913 / DSM 3586 / NCPPB 528 / LMG 568 / P 25</strain>
    </source>
</reference>
<sequence length="601" mass="66431">MSSDSMRNIRNFSIIAHVDHGKSTLADRIIQLCGGLQAREMEAQVLDSNPIERERGITIKAQSVSLPYTAKDGQTYFLNFIDTPGHVDFSYEVSRSLAACEGALLVVDAAQGVEAQSVANCYTAVEQGLEVVPVLNKIDLPTADIERAKAEIEAVIGIDAEDAVAVSAKTGLNIDLVLEAIVHRIPPPKPRDTDKLQALIIDSWFDNYLGVVSLVRVMQGEIKPGSKIQVMSTGRTHLVDKVGVFTPKRKELVALGAGEVGWINASIKDVHGAPVGDTLTLAADPAPHALPGFQEMQPRVFAGLFPVDAEDYPDLREALDKLRLNDAALRFEPESSEAMGFGFRCGFLGMLHMEIVQERLEREYNLNLISTAPTVVYEVLKTDGTIIPMDNPSKLPPLNHVEEIREPIIRANILTPPDYVGNIITLCEEKRGSQIGINYLGSQVQISYELPMAEVVLDFFDKLKSVSRGYASLDYHFLRFQVGPFVRVDTLINGDKVDALSIIVHRSYADRRGRELCEKMKELIPRQMFDVAIQAAVGSQIISRSTVKAMRKNVLAKCYGGDVSRKKKLLEKQKEGKKRMKQVGRVEIPQEAFLAVLQMDK</sequence>
<gene>
    <name evidence="1" type="primary">lepA</name>
    <name type="ordered locus">XCC1270</name>
</gene>
<keyword id="KW-0997">Cell inner membrane</keyword>
<keyword id="KW-1003">Cell membrane</keyword>
<keyword id="KW-0342">GTP-binding</keyword>
<keyword id="KW-0378">Hydrolase</keyword>
<keyword id="KW-0472">Membrane</keyword>
<keyword id="KW-0547">Nucleotide-binding</keyword>
<keyword id="KW-0648">Protein biosynthesis</keyword>
<keyword id="KW-1185">Reference proteome</keyword>
<organism>
    <name type="scientific">Xanthomonas campestris pv. campestris (strain ATCC 33913 / DSM 3586 / NCPPB 528 / LMG 568 / P 25)</name>
    <dbReference type="NCBI Taxonomy" id="190485"/>
    <lineage>
        <taxon>Bacteria</taxon>
        <taxon>Pseudomonadati</taxon>
        <taxon>Pseudomonadota</taxon>
        <taxon>Gammaproteobacteria</taxon>
        <taxon>Lysobacterales</taxon>
        <taxon>Lysobacteraceae</taxon>
        <taxon>Xanthomonas</taxon>
    </lineage>
</organism>